<gene>
    <name type="primary">glnH</name>
    <name type="ordered locus">BSU27440</name>
</gene>
<proteinExistence type="evidence at transcript level"/>
<feature type="signal peptide" evidence="2">
    <location>
        <begin position="1"/>
        <end position="20"/>
    </location>
</feature>
<feature type="chain" id="PRO_0000376835" description="ABC transporter glutamine-binding protein GlnH">
    <location>
        <begin position="21"/>
        <end position="273"/>
    </location>
</feature>
<feature type="lipid moiety-binding region" description="N-palmitoyl cysteine" evidence="2">
    <location>
        <position position="21"/>
    </location>
</feature>
<feature type="lipid moiety-binding region" description="S-diacylglycerol cysteine" evidence="2">
    <location>
        <position position="21"/>
    </location>
</feature>
<accession>O34563</accession>
<accession>Q798R1</accession>
<sequence length="273" mass="29756">MKKIFSLALISLFAVILLAACGSKGSNGEASKESKKDTLAAIKDNDKIVFGVKTDTRLFGLKNPSSGEIEGFDIDIAKQIAKDILGDEKKAQFKEVTSKTRIPMLQNGDIDAIVATMTITEERKKEVDFSDVYFEAGQSLLVKKGSKIKSVENLGKGSKVLAVKGSTSSQNIREKAPEASVLEFENYAEAFTALKSGQGDALTTDNAILYGMADENKNYQLTGKPFTDEPYGIAVKKGQSALAKEINASLKKMKSDGRYDEIYKKWIKEDPAE</sequence>
<protein>
    <recommendedName>
        <fullName>ABC transporter glutamine-binding protein GlnH</fullName>
    </recommendedName>
</protein>
<organism>
    <name type="scientific">Bacillus subtilis (strain 168)</name>
    <dbReference type="NCBI Taxonomy" id="224308"/>
    <lineage>
        <taxon>Bacteria</taxon>
        <taxon>Bacillati</taxon>
        <taxon>Bacillota</taxon>
        <taxon>Bacilli</taxon>
        <taxon>Bacillales</taxon>
        <taxon>Bacillaceae</taxon>
        <taxon>Bacillus</taxon>
    </lineage>
</organism>
<reference key="1">
    <citation type="journal article" date="1995" name="Microbiology">
        <title>An operon encoding a novel ABC-type transport system in Bacillus subtilis.</title>
        <authorList>
            <person name="Rodriguez F."/>
            <person name="Grandi G."/>
        </authorList>
    </citation>
    <scope>NUCLEOTIDE SEQUENCE [GENOMIC DNA]</scope>
    <source>
        <strain>168</strain>
    </source>
</reference>
<reference key="2">
    <citation type="journal article" date="1997" name="Nature">
        <title>The complete genome sequence of the Gram-positive bacterium Bacillus subtilis.</title>
        <authorList>
            <person name="Kunst F."/>
            <person name="Ogasawara N."/>
            <person name="Moszer I."/>
            <person name="Albertini A.M."/>
            <person name="Alloni G."/>
            <person name="Azevedo V."/>
            <person name="Bertero M.G."/>
            <person name="Bessieres P."/>
            <person name="Bolotin A."/>
            <person name="Borchert S."/>
            <person name="Borriss R."/>
            <person name="Boursier L."/>
            <person name="Brans A."/>
            <person name="Braun M."/>
            <person name="Brignell S.C."/>
            <person name="Bron S."/>
            <person name="Brouillet S."/>
            <person name="Bruschi C.V."/>
            <person name="Caldwell B."/>
            <person name="Capuano V."/>
            <person name="Carter N.M."/>
            <person name="Choi S.-K."/>
            <person name="Codani J.-J."/>
            <person name="Connerton I.F."/>
            <person name="Cummings N.J."/>
            <person name="Daniel R.A."/>
            <person name="Denizot F."/>
            <person name="Devine K.M."/>
            <person name="Duesterhoeft A."/>
            <person name="Ehrlich S.D."/>
            <person name="Emmerson P.T."/>
            <person name="Entian K.-D."/>
            <person name="Errington J."/>
            <person name="Fabret C."/>
            <person name="Ferrari E."/>
            <person name="Foulger D."/>
            <person name="Fritz C."/>
            <person name="Fujita M."/>
            <person name="Fujita Y."/>
            <person name="Fuma S."/>
            <person name="Galizzi A."/>
            <person name="Galleron N."/>
            <person name="Ghim S.-Y."/>
            <person name="Glaser P."/>
            <person name="Goffeau A."/>
            <person name="Golightly E.J."/>
            <person name="Grandi G."/>
            <person name="Guiseppi G."/>
            <person name="Guy B.J."/>
            <person name="Haga K."/>
            <person name="Haiech J."/>
            <person name="Harwood C.R."/>
            <person name="Henaut A."/>
            <person name="Hilbert H."/>
            <person name="Holsappel S."/>
            <person name="Hosono S."/>
            <person name="Hullo M.-F."/>
            <person name="Itaya M."/>
            <person name="Jones L.-M."/>
            <person name="Joris B."/>
            <person name="Karamata D."/>
            <person name="Kasahara Y."/>
            <person name="Klaerr-Blanchard M."/>
            <person name="Klein C."/>
            <person name="Kobayashi Y."/>
            <person name="Koetter P."/>
            <person name="Koningstein G."/>
            <person name="Krogh S."/>
            <person name="Kumano M."/>
            <person name="Kurita K."/>
            <person name="Lapidus A."/>
            <person name="Lardinois S."/>
            <person name="Lauber J."/>
            <person name="Lazarevic V."/>
            <person name="Lee S.-M."/>
            <person name="Levine A."/>
            <person name="Liu H."/>
            <person name="Masuda S."/>
            <person name="Mauel C."/>
            <person name="Medigue C."/>
            <person name="Medina N."/>
            <person name="Mellado R.P."/>
            <person name="Mizuno M."/>
            <person name="Moestl D."/>
            <person name="Nakai S."/>
            <person name="Noback M."/>
            <person name="Noone D."/>
            <person name="O'Reilly M."/>
            <person name="Ogawa K."/>
            <person name="Ogiwara A."/>
            <person name="Oudega B."/>
            <person name="Park S.-H."/>
            <person name="Parro V."/>
            <person name="Pohl T.M."/>
            <person name="Portetelle D."/>
            <person name="Porwollik S."/>
            <person name="Prescott A.M."/>
            <person name="Presecan E."/>
            <person name="Pujic P."/>
            <person name="Purnelle B."/>
            <person name="Rapoport G."/>
            <person name="Rey M."/>
            <person name="Reynolds S."/>
            <person name="Rieger M."/>
            <person name="Rivolta C."/>
            <person name="Rocha E."/>
            <person name="Roche B."/>
            <person name="Rose M."/>
            <person name="Sadaie Y."/>
            <person name="Sato T."/>
            <person name="Scanlan E."/>
            <person name="Schleich S."/>
            <person name="Schroeter R."/>
            <person name="Scoffone F."/>
            <person name="Sekiguchi J."/>
            <person name="Sekowska A."/>
            <person name="Seror S.J."/>
            <person name="Serror P."/>
            <person name="Shin B.-S."/>
            <person name="Soldo B."/>
            <person name="Sorokin A."/>
            <person name="Tacconi E."/>
            <person name="Takagi T."/>
            <person name="Takahashi H."/>
            <person name="Takemaru K."/>
            <person name="Takeuchi M."/>
            <person name="Tamakoshi A."/>
            <person name="Tanaka T."/>
            <person name="Terpstra P."/>
            <person name="Tognoni A."/>
            <person name="Tosato V."/>
            <person name="Uchiyama S."/>
            <person name="Vandenbol M."/>
            <person name="Vannier F."/>
            <person name="Vassarotti A."/>
            <person name="Viari A."/>
            <person name="Wambutt R."/>
            <person name="Wedler E."/>
            <person name="Wedler H."/>
            <person name="Weitzenegger T."/>
            <person name="Winters P."/>
            <person name="Wipat A."/>
            <person name="Yamamoto H."/>
            <person name="Yamane K."/>
            <person name="Yasumoto K."/>
            <person name="Yata K."/>
            <person name="Yoshida K."/>
            <person name="Yoshikawa H.-F."/>
            <person name="Zumstein E."/>
            <person name="Yoshikawa H."/>
            <person name="Danchin A."/>
        </authorList>
    </citation>
    <scope>NUCLEOTIDE SEQUENCE [LARGE SCALE GENOMIC DNA]</scope>
    <source>
        <strain>168</strain>
    </source>
</reference>
<reference key="3">
    <citation type="journal article" date="2003" name="Mol. Microbiol.">
        <title>Identification of additional TnrA-regulated genes of Bacillus subtilis associated with a TnrA box.</title>
        <authorList>
            <person name="Yoshida K."/>
            <person name="Yamaguchi H."/>
            <person name="Kinehara M."/>
            <person name="Ohki Y.-H."/>
            <person name="Nakaura Y."/>
            <person name="Fujita Y."/>
        </authorList>
    </citation>
    <scope>INDUCTION BY TNRA</scope>
</reference>
<comment type="function">
    <text evidence="1">Part of the ABC transporter complex GlnHMPQ involved in glutamine transport.</text>
</comment>
<comment type="subunit">
    <text evidence="4">The complex is composed of two ATP-binding proteins (GlnQ), two transmembrane proteins (GlnM and GlnP) and a solute-binding protein (GlnH).</text>
</comment>
<comment type="subcellular location">
    <subcellularLocation>
        <location evidence="2">Cell membrane</location>
        <topology evidence="2">Lipid-anchor</topology>
    </subcellularLocation>
</comment>
<comment type="induction">
    <text evidence="3">Positively regulated by TnrA under nitrogen-limited conditions.</text>
</comment>
<comment type="similarity">
    <text evidence="4">Belongs to the bacterial solute-binding protein 3 family.</text>
</comment>
<keyword id="KW-0029">Amino-acid transport</keyword>
<keyword id="KW-1003">Cell membrane</keyword>
<keyword id="KW-0449">Lipoprotein</keyword>
<keyword id="KW-0472">Membrane</keyword>
<keyword id="KW-0564">Palmitate</keyword>
<keyword id="KW-1185">Reference proteome</keyword>
<keyword id="KW-0732">Signal</keyword>
<keyword id="KW-0813">Transport</keyword>
<dbReference type="EMBL" id="Z69371">
    <property type="protein sequence ID" value="CAA93318.1"/>
    <property type="molecule type" value="Genomic_DNA"/>
</dbReference>
<dbReference type="EMBL" id="AL009126">
    <property type="protein sequence ID" value="CAB14685.1"/>
    <property type="molecule type" value="Genomic_DNA"/>
</dbReference>
<dbReference type="PIR" id="D69633">
    <property type="entry name" value="D69633"/>
</dbReference>
<dbReference type="RefSeq" id="NP_390621.1">
    <property type="nucleotide sequence ID" value="NC_000964.3"/>
</dbReference>
<dbReference type="RefSeq" id="WP_003245954.1">
    <property type="nucleotide sequence ID" value="NZ_OZ025638.1"/>
</dbReference>
<dbReference type="SMR" id="O34563"/>
<dbReference type="FunCoup" id="O34563">
    <property type="interactions" value="201"/>
</dbReference>
<dbReference type="STRING" id="224308.BSU27440"/>
<dbReference type="PaxDb" id="224308-BSU27440"/>
<dbReference type="EnsemblBacteria" id="CAB14685">
    <property type="protein sequence ID" value="CAB14685"/>
    <property type="gene ID" value="BSU_27440"/>
</dbReference>
<dbReference type="GeneID" id="938139"/>
<dbReference type="KEGG" id="bsu:BSU27440"/>
<dbReference type="PATRIC" id="fig|224308.179.peg.2980"/>
<dbReference type="eggNOG" id="COG0834">
    <property type="taxonomic scope" value="Bacteria"/>
</dbReference>
<dbReference type="InParanoid" id="O34563"/>
<dbReference type="OrthoDB" id="115856at2"/>
<dbReference type="PhylomeDB" id="O34563"/>
<dbReference type="BioCyc" id="BSUB:BSU27440-MONOMER"/>
<dbReference type="Proteomes" id="UP000001570">
    <property type="component" value="Chromosome"/>
</dbReference>
<dbReference type="GO" id="GO:0005576">
    <property type="term" value="C:extracellular region"/>
    <property type="evidence" value="ECO:0000318"/>
    <property type="project" value="GO_Central"/>
</dbReference>
<dbReference type="GO" id="GO:0030288">
    <property type="term" value="C:outer membrane-bounded periplasmic space"/>
    <property type="evidence" value="ECO:0000318"/>
    <property type="project" value="GO_Central"/>
</dbReference>
<dbReference type="GO" id="GO:0005886">
    <property type="term" value="C:plasma membrane"/>
    <property type="evidence" value="ECO:0007669"/>
    <property type="project" value="UniProtKB-SubCell"/>
</dbReference>
<dbReference type="GO" id="GO:0015276">
    <property type="term" value="F:ligand-gated monoatomic ion channel activity"/>
    <property type="evidence" value="ECO:0007669"/>
    <property type="project" value="InterPro"/>
</dbReference>
<dbReference type="GO" id="GO:0006865">
    <property type="term" value="P:amino acid transport"/>
    <property type="evidence" value="ECO:0000318"/>
    <property type="project" value="GO_Central"/>
</dbReference>
<dbReference type="CDD" id="cd01000">
    <property type="entry name" value="PBP2_Cys_DEBP_like"/>
    <property type="match status" value="1"/>
</dbReference>
<dbReference type="Gene3D" id="3.40.190.10">
    <property type="entry name" value="Periplasmic binding protein-like II"/>
    <property type="match status" value="2"/>
</dbReference>
<dbReference type="InterPro" id="IPR051455">
    <property type="entry name" value="Bact_solute-bind_prot3"/>
</dbReference>
<dbReference type="InterPro" id="IPR001320">
    <property type="entry name" value="Iontro_rcpt_C"/>
</dbReference>
<dbReference type="InterPro" id="IPR018313">
    <property type="entry name" value="SBP_3_CS"/>
</dbReference>
<dbReference type="InterPro" id="IPR001638">
    <property type="entry name" value="Solute-binding_3/MltF_N"/>
</dbReference>
<dbReference type="PANTHER" id="PTHR30085:SF6">
    <property type="entry name" value="ABC TRANSPORTER GLUTAMINE-BINDING PROTEIN GLNH"/>
    <property type="match status" value="1"/>
</dbReference>
<dbReference type="PANTHER" id="PTHR30085">
    <property type="entry name" value="AMINO ACID ABC TRANSPORTER PERMEASE"/>
    <property type="match status" value="1"/>
</dbReference>
<dbReference type="Pfam" id="PF00497">
    <property type="entry name" value="SBP_bac_3"/>
    <property type="match status" value="1"/>
</dbReference>
<dbReference type="SMART" id="SM00062">
    <property type="entry name" value="PBPb"/>
    <property type="match status" value="1"/>
</dbReference>
<dbReference type="SMART" id="SM00079">
    <property type="entry name" value="PBPe"/>
    <property type="match status" value="1"/>
</dbReference>
<dbReference type="SUPFAM" id="SSF53850">
    <property type="entry name" value="Periplasmic binding protein-like II"/>
    <property type="match status" value="1"/>
</dbReference>
<dbReference type="PROSITE" id="PS51257">
    <property type="entry name" value="PROKAR_LIPOPROTEIN"/>
    <property type="match status" value="1"/>
</dbReference>
<dbReference type="PROSITE" id="PS01039">
    <property type="entry name" value="SBP_BACTERIAL_3"/>
    <property type="match status" value="1"/>
</dbReference>
<name>GLNH_BACSU</name>
<evidence type="ECO:0000250" key="1"/>
<evidence type="ECO:0000255" key="2">
    <source>
        <dbReference type="PROSITE-ProRule" id="PRU00303"/>
    </source>
</evidence>
<evidence type="ECO:0000269" key="3">
    <source>
    </source>
</evidence>
<evidence type="ECO:0000305" key="4"/>